<accession>A1CPP3</accession>
<gene>
    <name type="primary">sey1</name>
    <name type="ORF">ACLA_023280</name>
</gene>
<evidence type="ECO:0000255" key="1">
    <source>
        <dbReference type="HAMAP-Rule" id="MF_03109"/>
    </source>
</evidence>
<evidence type="ECO:0000255" key="2">
    <source>
        <dbReference type="PROSITE-ProRule" id="PRU01052"/>
    </source>
</evidence>
<evidence type="ECO:0000256" key="3">
    <source>
        <dbReference type="SAM" id="MobiDB-lite"/>
    </source>
</evidence>
<proteinExistence type="inferred from homology"/>
<protein>
    <recommendedName>
        <fullName evidence="1">Protein sey1</fullName>
        <ecNumber evidence="1">3.6.5.-</ecNumber>
    </recommendedName>
</protein>
<comment type="function">
    <text evidence="1">Cooperates with the reticulon proteins and tubule-shaping DP1 family proteins to generate and maintain the structure of the tubular endoplasmic reticulum network. Has GTPase activity, which is required for its function in ER organization.</text>
</comment>
<comment type="subcellular location">
    <subcellularLocation>
        <location evidence="1">Endoplasmic reticulum membrane</location>
        <topology evidence="1">Multi-pass membrane protein</topology>
    </subcellularLocation>
    <text evidence="1">Enriched in the cortical ER. Concentrated in punctae along the ER tubules.</text>
</comment>
<comment type="similarity">
    <text evidence="2">Belongs to the TRAFAC class dynamin-like GTPase superfamily. GB1/RHD3 GTPase family. RHD3 subfamily.</text>
</comment>
<dbReference type="EC" id="3.6.5.-" evidence="1"/>
<dbReference type="EMBL" id="DS027059">
    <property type="protein sequence ID" value="EAW07614.1"/>
    <property type="molecule type" value="Genomic_DNA"/>
</dbReference>
<dbReference type="RefSeq" id="XP_001269040.1">
    <property type="nucleotide sequence ID" value="XM_001269039.1"/>
</dbReference>
<dbReference type="SMR" id="A1CPP3"/>
<dbReference type="STRING" id="344612.A1CPP3"/>
<dbReference type="EnsemblFungi" id="EAW07614">
    <property type="protein sequence ID" value="EAW07614"/>
    <property type="gene ID" value="ACLA_023280"/>
</dbReference>
<dbReference type="GeneID" id="4701515"/>
<dbReference type="KEGG" id="act:ACLA_023280"/>
<dbReference type="eggNOG" id="KOG2203">
    <property type="taxonomic scope" value="Eukaryota"/>
</dbReference>
<dbReference type="OrthoDB" id="1597724at2759"/>
<dbReference type="Proteomes" id="UP000006701">
    <property type="component" value="Unassembled WGS sequence"/>
</dbReference>
<dbReference type="GO" id="GO:0005789">
    <property type="term" value="C:endoplasmic reticulum membrane"/>
    <property type="evidence" value="ECO:0007669"/>
    <property type="project" value="UniProtKB-SubCell"/>
</dbReference>
<dbReference type="GO" id="GO:0005525">
    <property type="term" value="F:GTP binding"/>
    <property type="evidence" value="ECO:0007669"/>
    <property type="project" value="UniProtKB-UniRule"/>
</dbReference>
<dbReference type="GO" id="GO:0003924">
    <property type="term" value="F:GTPase activity"/>
    <property type="evidence" value="ECO:0007669"/>
    <property type="project" value="UniProtKB-UniRule"/>
</dbReference>
<dbReference type="GO" id="GO:0016320">
    <property type="term" value="P:endoplasmic reticulum membrane fusion"/>
    <property type="evidence" value="ECO:0007669"/>
    <property type="project" value="TreeGrafter"/>
</dbReference>
<dbReference type="CDD" id="cd01851">
    <property type="entry name" value="GBP"/>
    <property type="match status" value="1"/>
</dbReference>
<dbReference type="FunFam" id="3.40.50.300:FF:000727">
    <property type="entry name" value="Protein SEY1 homolog"/>
    <property type="match status" value="1"/>
</dbReference>
<dbReference type="Gene3D" id="3.40.50.300">
    <property type="entry name" value="P-loop containing nucleotide triphosphate hydrolases"/>
    <property type="match status" value="1"/>
</dbReference>
<dbReference type="HAMAP" id="MF_03109">
    <property type="entry name" value="Sey1"/>
    <property type="match status" value="1"/>
</dbReference>
<dbReference type="InterPro" id="IPR030386">
    <property type="entry name" value="G_GB1_RHD3_dom"/>
</dbReference>
<dbReference type="InterPro" id="IPR027417">
    <property type="entry name" value="P-loop_NTPase"/>
</dbReference>
<dbReference type="InterPro" id="IPR008803">
    <property type="entry name" value="RHD3/Sey1"/>
</dbReference>
<dbReference type="InterPro" id="IPR046758">
    <property type="entry name" value="Sey1/RHD3-like_3HB"/>
</dbReference>
<dbReference type="PANTHER" id="PTHR45923">
    <property type="entry name" value="PROTEIN SEY1"/>
    <property type="match status" value="1"/>
</dbReference>
<dbReference type="PANTHER" id="PTHR45923:SF2">
    <property type="entry name" value="PROTEIN SEY1"/>
    <property type="match status" value="1"/>
</dbReference>
<dbReference type="Pfam" id="PF05879">
    <property type="entry name" value="RHD3_GTPase"/>
    <property type="match status" value="1"/>
</dbReference>
<dbReference type="Pfam" id="PF20428">
    <property type="entry name" value="Sey1_3HB"/>
    <property type="match status" value="1"/>
</dbReference>
<dbReference type="SUPFAM" id="SSF52540">
    <property type="entry name" value="P-loop containing nucleoside triphosphate hydrolases"/>
    <property type="match status" value="1"/>
</dbReference>
<dbReference type="PROSITE" id="PS51715">
    <property type="entry name" value="G_GB1_RHD3"/>
    <property type="match status" value="1"/>
</dbReference>
<reference key="1">
    <citation type="journal article" date="2008" name="PLoS Genet.">
        <title>Genomic islands in the pathogenic filamentous fungus Aspergillus fumigatus.</title>
        <authorList>
            <person name="Fedorova N.D."/>
            <person name="Khaldi N."/>
            <person name="Joardar V.S."/>
            <person name="Maiti R."/>
            <person name="Amedeo P."/>
            <person name="Anderson M.J."/>
            <person name="Crabtree J."/>
            <person name="Silva J.C."/>
            <person name="Badger J.H."/>
            <person name="Albarraq A."/>
            <person name="Angiuoli S."/>
            <person name="Bussey H."/>
            <person name="Bowyer P."/>
            <person name="Cotty P.J."/>
            <person name="Dyer P.S."/>
            <person name="Egan A."/>
            <person name="Galens K."/>
            <person name="Fraser-Liggett C.M."/>
            <person name="Haas B.J."/>
            <person name="Inman J.M."/>
            <person name="Kent R."/>
            <person name="Lemieux S."/>
            <person name="Malavazi I."/>
            <person name="Orvis J."/>
            <person name="Roemer T."/>
            <person name="Ronning C.M."/>
            <person name="Sundaram J.P."/>
            <person name="Sutton G."/>
            <person name="Turner G."/>
            <person name="Venter J.C."/>
            <person name="White O.R."/>
            <person name="Whitty B.R."/>
            <person name="Youngman P."/>
            <person name="Wolfe K.H."/>
            <person name="Goldman G.H."/>
            <person name="Wortman J.R."/>
            <person name="Jiang B."/>
            <person name="Denning D.W."/>
            <person name="Nierman W.C."/>
        </authorList>
    </citation>
    <scope>NUCLEOTIDE SEQUENCE [LARGE SCALE GENOMIC DNA]</scope>
    <source>
        <strain>ATCC 1007 / CBS 513.65 / DSM 816 / NCTC 3887 / NRRL 1 / QM 1276 / 107</strain>
    </source>
</reference>
<name>SEY1_ASPCL</name>
<keyword id="KW-0175">Coiled coil</keyword>
<keyword id="KW-0256">Endoplasmic reticulum</keyword>
<keyword id="KW-0342">GTP-binding</keyword>
<keyword id="KW-0378">Hydrolase</keyword>
<keyword id="KW-0472">Membrane</keyword>
<keyword id="KW-0547">Nucleotide-binding</keyword>
<keyword id="KW-1185">Reference proteome</keyword>
<keyword id="KW-0812">Transmembrane</keyword>
<keyword id="KW-1133">Transmembrane helix</keyword>
<organism>
    <name type="scientific">Aspergillus clavatus (strain ATCC 1007 / CBS 513.65 / DSM 816 / NCTC 3887 / NRRL 1 / QM 1276 / 107)</name>
    <dbReference type="NCBI Taxonomy" id="344612"/>
    <lineage>
        <taxon>Eukaryota</taxon>
        <taxon>Fungi</taxon>
        <taxon>Dikarya</taxon>
        <taxon>Ascomycota</taxon>
        <taxon>Pezizomycotina</taxon>
        <taxon>Eurotiomycetes</taxon>
        <taxon>Eurotiomycetidae</taxon>
        <taxon>Eurotiales</taxon>
        <taxon>Aspergillaceae</taxon>
        <taxon>Aspergillus</taxon>
        <taxon>Aspergillus subgen. Fumigati</taxon>
    </lineage>
</organism>
<feature type="chain" id="PRO_0000384969" description="Protein sey1">
    <location>
        <begin position="1"/>
        <end position="865"/>
    </location>
</feature>
<feature type="topological domain" description="Cytoplasmic" evidence="1">
    <location>
        <begin position="1"/>
        <end position="745"/>
    </location>
</feature>
<feature type="transmembrane region" description="Helical" evidence="1">
    <location>
        <begin position="746"/>
        <end position="766"/>
    </location>
</feature>
<feature type="topological domain" description="Lumenal" evidence="1">
    <location>
        <begin position="767"/>
        <end position="769"/>
    </location>
</feature>
<feature type="transmembrane region" description="Helical" evidence="1">
    <location>
        <begin position="770"/>
        <end position="790"/>
    </location>
</feature>
<feature type="topological domain" description="Cytoplasmic" evidence="1">
    <location>
        <begin position="791"/>
        <end position="865"/>
    </location>
</feature>
<feature type="domain" description="GB1/RHD3-type G" evidence="2">
    <location>
        <begin position="47"/>
        <end position="303"/>
    </location>
</feature>
<feature type="region of interest" description="Disordered" evidence="3">
    <location>
        <begin position="673"/>
        <end position="699"/>
    </location>
</feature>
<feature type="region of interest" description="Disordered" evidence="3">
    <location>
        <begin position="824"/>
        <end position="865"/>
    </location>
</feature>
<feature type="coiled-coil region" evidence="1">
    <location>
        <begin position="478"/>
        <end position="504"/>
    </location>
</feature>
<feature type="coiled-coil region" evidence="1">
    <location>
        <begin position="699"/>
        <end position="719"/>
    </location>
</feature>
<feature type="compositionally biased region" description="Acidic residues" evidence="3">
    <location>
        <begin position="686"/>
        <end position="699"/>
    </location>
</feature>
<feature type="compositionally biased region" description="Polar residues" evidence="3">
    <location>
        <begin position="824"/>
        <end position="833"/>
    </location>
</feature>
<feature type="binding site" evidence="1">
    <location>
        <begin position="57"/>
        <end position="64"/>
    </location>
    <ligand>
        <name>GTP</name>
        <dbReference type="ChEBI" id="CHEBI:37565"/>
    </ligand>
</feature>
<sequence>MAPCHSRDASIMIDSYEHGVQVIDENKEFKNPNISKYLSLENVTHAGFNYHLISVFGSQSTGKSTLLNHLFGTHFSVMAERERRQTTKGIWMSKNKNGGEVSADHSARMADNILVMDVEGTDGRERGEDQDFERKSALFALATSEVLIVNIWEHQVGLYQGANMGLLKTVFEVNLQLFLKDKNTTHRSLLFFVIRDFVGTTPLQNLQTTLMEDMSRLWDSISKPPGLENSSVHDYFDFQFYGLPHKSYQPEQFVAETKKLSLRFREGQRDPAMDARRGKFSEGGVFLPEYHRRIPADGFSRYAEGIWDQIVNNKDLDLPTQQELLAQFRCDEIMREVMLVFDEAITPFEEKQSQAARLGEPEVLGGLGAAMRSSRTKAINEFEIEASRYHKGVYQRKQEELEDKIDTRLKALLQGQLNAAHKSGINEFTEAVSAAVKMGQKHGTGYDFAEIVNGEVRKAVAKYEDVARSTVVESTSWRDYSQELSLYEKELAEVSGRLRREEMRRLASRVERWVQSRLGDSVGLEFNALGSGRAGGGAPESGEKPSEKAFWDRIWNVFVETVLDAERRFTDRASSFDASLEEVDVGLWRLRRKSWGVLRAKVDEEMTEGNLLLKLRENFEDKFRYDDAGVPRIWRPTDDIEGIYTRARESTLTLIPLLSRFRLAETSAPPPLDRWIGHTPSSATPADEEDLPPIGGVDEEEGKSLEEEMTILSEAKSQELTVRFKKSADGVYVEAKRSAIGGMTQVPLYFYGLLLALGWNEIVAVLRNPAYFFLLFVCAVGAYVTYQLNLWGPIIKMTEAASNQALVEGKKRLREFLESSDTGRQAIAMSTSGAGSGRSGEQYEMSDFSQKSKTASPADEDTDTL</sequence>